<reference key="1">
    <citation type="journal article" date="1989" name="Virology">
        <title>Evolutionary pathways of the PA genes of influenza A viruses.</title>
        <authorList>
            <person name="Okazaki K."/>
            <person name="Kawaoka Y."/>
            <person name="Webster R.G."/>
        </authorList>
    </citation>
    <scope>NUCLEOTIDE SEQUENCE [GENOMIC RNA]</scope>
</reference>
<protein>
    <recommendedName>
        <fullName>Protein PA-X</fullName>
    </recommendedName>
</protein>
<accession>P0CK87</accession>
<sequence>MEDFVRQCFNPMIVELAEKAMKEYGEDPKIETNKFAAICTHLEVCFMYSDFHFINELGESVIIESGDPNALLKHRFEIIEGRDRTMAWTVVNSICNTTRAEKPKFLPDLYDYKENRFVEIGVTRREVHIYYLEKANKIKSEKTHIHIFSFTGEEMATKADYTLDEESRARIKTRLFTIRQEMASRGLWDSFVSPREAKRQLKKDLKSQGRCAGLPITVSHRTSPALKILESMWMDSNRTAALRVSFLKCPKK</sequence>
<dbReference type="EMBL" id="M26082">
    <property type="status" value="NOT_ANNOTATED_CDS"/>
    <property type="molecule type" value="Genomic_RNA"/>
</dbReference>
<dbReference type="SMR" id="P0CK87"/>
<dbReference type="GO" id="GO:0003723">
    <property type="term" value="F:RNA binding"/>
    <property type="evidence" value="ECO:0007669"/>
    <property type="project" value="InterPro"/>
</dbReference>
<dbReference type="GO" id="GO:0039694">
    <property type="term" value="P:viral RNA genome replication"/>
    <property type="evidence" value="ECO:0007669"/>
    <property type="project" value="InterPro"/>
</dbReference>
<dbReference type="GO" id="GO:0075523">
    <property type="term" value="P:viral translational frameshifting"/>
    <property type="evidence" value="ECO:0007669"/>
    <property type="project" value="UniProtKB-KW"/>
</dbReference>
<dbReference type="FunFam" id="3.40.91.90:FF:000001">
    <property type="entry name" value="Polymerase acidic protein"/>
    <property type="match status" value="1"/>
</dbReference>
<dbReference type="Gene3D" id="3.40.91.90">
    <property type="entry name" value="Influenza RNA-dependent RNA polymerase subunit PA, endonuclease domain"/>
    <property type="match status" value="1"/>
</dbReference>
<dbReference type="InterPro" id="IPR001009">
    <property type="entry name" value="PA/PA-X"/>
</dbReference>
<dbReference type="InterPro" id="IPR038372">
    <property type="entry name" value="PA/PA-X_sf"/>
</dbReference>
<dbReference type="Pfam" id="PF00603">
    <property type="entry name" value="Flu_PA"/>
    <property type="match status" value="1"/>
</dbReference>
<name>PAX_I86A3</name>
<keyword id="KW-1132">Decay of host mRNAs by virus</keyword>
<keyword id="KW-1262">Eukaryotic host gene expression shutoff by virus</keyword>
<keyword id="KW-1035">Host cytoplasm</keyword>
<keyword id="KW-1190">Host gene expression shutoff by virus</keyword>
<keyword id="KW-1192">Host mRNA suppression by virus</keyword>
<keyword id="KW-1048">Host nucleus</keyword>
<keyword id="KW-0945">Host-virus interaction</keyword>
<keyword id="KW-0688">Ribosomal frameshifting</keyword>
<comment type="function">
    <text evidence="1 4">Plays a major role in the shutoff of the host protein expression by cleaving mRNAs probably via an endonuclease activity. This host shutoff allows the virus to escape from the host antiviral response (By similarity). Hijacks host RNA splicing machinery to selectively target host RNAs containing introns for destruction. This may explain the preferential degradation of RNAs that have undergone co- or post-transcriptional processing (By similarity).</text>
</comment>
<comment type="subcellular location">
    <subcellularLocation>
        <location evidence="4">Host cytoplasm</location>
    </subcellularLocation>
    <subcellularLocation>
        <location evidence="4">Host nucleus</location>
    </subcellularLocation>
</comment>
<comment type="alternative products">
    <event type="ribosomal frameshifting"/>
    <isoform>
        <id>P0CK87-1</id>
        <name>PA-X</name>
        <sequence type="displayed"/>
    </isoform>
    <isoform>
        <id>P13169-1</id>
        <name>PA</name>
        <sequence type="external"/>
    </isoform>
</comment>
<comment type="domain">
    <text evidence="1 4">The probable endonuclease active site in the N-terminus and the basic amino acid cluster in the C-terminus are important for the shutoff activity. The C-terminus acts as a nuclear localization signal (By similarity). The C-terminus is recruited to host protein complexes involved in nuclear Pol II RNA processing (By similarity).</text>
</comment>
<comment type="similarity">
    <text evidence="5">Belongs to the influenza viruses PA-X family.</text>
</comment>
<evidence type="ECO:0000250" key="1">
    <source>
        <dbReference type="UniProtKB" id="P0CK64"/>
    </source>
</evidence>
<evidence type="ECO:0000250" key="2">
    <source>
        <dbReference type="UniProtKB" id="P0CK68"/>
    </source>
</evidence>
<evidence type="ECO:0000250" key="3">
    <source>
        <dbReference type="UniProtKB" id="P0DJW8"/>
    </source>
</evidence>
<evidence type="ECO:0000250" key="4">
    <source>
        <dbReference type="UniProtKB" id="P0DXO5"/>
    </source>
</evidence>
<evidence type="ECO:0000305" key="5"/>
<feature type="chain" id="PRO_0000419370" description="Protein PA-X">
    <location>
        <begin position="1"/>
        <end position="252"/>
    </location>
</feature>
<feature type="active site" evidence="2">
    <location>
        <position position="80"/>
    </location>
</feature>
<feature type="active site" evidence="2">
    <location>
        <position position="108"/>
    </location>
</feature>
<feature type="site" description="Important for efficient shutoff activity and nuclear localization" evidence="4">
    <location>
        <position position="195"/>
    </location>
</feature>
<feature type="site" description="Important for efficient shutoff activity and nuclear localization" evidence="4">
    <location>
        <position position="198"/>
    </location>
</feature>
<feature type="site" description="Important for efficient shutoff activity and nuclear localization" evidence="4">
    <location>
        <position position="199"/>
    </location>
</feature>
<feature type="site" description="Important for efficient shutoff activity" evidence="3">
    <location>
        <position position="202"/>
    </location>
</feature>
<feature type="site" description="Important for efficient shutoff activity" evidence="3">
    <location>
        <position position="203"/>
    </location>
</feature>
<feature type="site" description="Important for efficient shutoff activity" evidence="3">
    <location>
        <position position="206"/>
    </location>
</feature>
<proteinExistence type="inferred from homology"/>
<gene>
    <name type="primary">PA</name>
</gene>
<organismHost>
    <name type="scientific">Aves</name>
    <dbReference type="NCBI Taxonomy" id="8782"/>
</organismHost>
<organismHost>
    <name type="scientific">Equus caballus</name>
    <name type="common">Horse</name>
    <dbReference type="NCBI Taxonomy" id="9796"/>
</organismHost>
<organism>
    <name type="scientific">Influenza A virus (strain A/Equine/Tennessee/5/1986 H3N8)</name>
    <dbReference type="NCBI Taxonomy" id="380339"/>
    <lineage>
        <taxon>Viruses</taxon>
        <taxon>Riboviria</taxon>
        <taxon>Orthornavirae</taxon>
        <taxon>Negarnaviricota</taxon>
        <taxon>Polyploviricotina</taxon>
        <taxon>Insthoviricetes</taxon>
        <taxon>Articulavirales</taxon>
        <taxon>Orthomyxoviridae</taxon>
        <taxon>Alphainfluenzavirus</taxon>
        <taxon>Alphainfluenzavirus influenzae</taxon>
        <taxon>Influenza A virus</taxon>
    </lineage>
</organism>